<feature type="chain" id="PRO_0000386412" description="GTPase Obg">
    <location>
        <begin position="1"/>
        <end position="390"/>
    </location>
</feature>
<feature type="domain" description="Obg" evidence="2">
    <location>
        <begin position="1"/>
        <end position="159"/>
    </location>
</feature>
<feature type="domain" description="OBG-type G" evidence="1">
    <location>
        <begin position="160"/>
        <end position="333"/>
    </location>
</feature>
<feature type="region of interest" description="Disordered" evidence="3">
    <location>
        <begin position="364"/>
        <end position="390"/>
    </location>
</feature>
<feature type="compositionally biased region" description="Acidic residues" evidence="3">
    <location>
        <begin position="364"/>
        <end position="384"/>
    </location>
</feature>
<feature type="binding site" evidence="1">
    <location>
        <begin position="166"/>
        <end position="173"/>
    </location>
    <ligand>
        <name>GTP</name>
        <dbReference type="ChEBI" id="CHEBI:37565"/>
    </ligand>
</feature>
<feature type="binding site" evidence="1">
    <location>
        <position position="173"/>
    </location>
    <ligand>
        <name>Mg(2+)</name>
        <dbReference type="ChEBI" id="CHEBI:18420"/>
    </ligand>
</feature>
<feature type="binding site" evidence="1">
    <location>
        <begin position="191"/>
        <end position="195"/>
    </location>
    <ligand>
        <name>GTP</name>
        <dbReference type="ChEBI" id="CHEBI:37565"/>
    </ligand>
</feature>
<feature type="binding site" evidence="1">
    <location>
        <position position="193"/>
    </location>
    <ligand>
        <name>Mg(2+)</name>
        <dbReference type="ChEBI" id="CHEBI:18420"/>
    </ligand>
</feature>
<feature type="binding site" evidence="1">
    <location>
        <begin position="213"/>
        <end position="216"/>
    </location>
    <ligand>
        <name>GTP</name>
        <dbReference type="ChEBI" id="CHEBI:37565"/>
    </ligand>
</feature>
<feature type="binding site" evidence="1">
    <location>
        <begin position="283"/>
        <end position="286"/>
    </location>
    <ligand>
        <name>GTP</name>
        <dbReference type="ChEBI" id="CHEBI:37565"/>
    </ligand>
</feature>
<feature type="binding site" evidence="1">
    <location>
        <begin position="314"/>
        <end position="316"/>
    </location>
    <ligand>
        <name>GTP</name>
        <dbReference type="ChEBI" id="CHEBI:37565"/>
    </ligand>
</feature>
<gene>
    <name evidence="1" type="primary">obg</name>
    <name type="ordered locus">YPTS_0497</name>
</gene>
<sequence>MKFVDEAAILVVAGDGGNGCVSFRREKYIPNGGPDGGDGGDGGDIYLLADENLNTLIDYRFVKSFRAERGQNGQSRDCTGKRGKDITIKVPVGTRVLDQGTGEIVGDMVRHGQRLMVAKGGFHGLGNSRFKSSVNRAPRQKTMGTEGETRELMLELLLLADVGMLGLPNAGKSTFIRAVSAAKPKVADYPFTTLIPSLGVVRMDYEQSFVIADIPGLIEGASDGAGLGIRFLKHLERCRVLLHLVDLAPIDESDPAENAKVIVNELQQYSENLAEKPRWLVFNKIDLIDPEEAEKRAKAIVETLGWEGKYYMISAANRDNVNALCWDVMSFLNSQPKAMAIAESVPEKVEFMWDDYHREQLAEVEAEAEDDWDDDWDEEDDDGVEIIYER</sequence>
<comment type="function">
    <text evidence="1">An essential GTPase which binds GTP, GDP and possibly (p)ppGpp with moderate affinity, with high nucleotide exchange rates and a fairly low GTP hydrolysis rate. Plays a role in control of the cell cycle, stress response, ribosome biogenesis and in those bacteria that undergo differentiation, in morphogenesis control.</text>
</comment>
<comment type="cofactor">
    <cofactor evidence="1">
        <name>Mg(2+)</name>
        <dbReference type="ChEBI" id="CHEBI:18420"/>
    </cofactor>
</comment>
<comment type="subunit">
    <text evidence="1">Monomer.</text>
</comment>
<comment type="subcellular location">
    <subcellularLocation>
        <location evidence="1">Cytoplasm</location>
    </subcellularLocation>
</comment>
<comment type="similarity">
    <text evidence="1">Belongs to the TRAFAC class OBG-HflX-like GTPase superfamily. OBG GTPase family.</text>
</comment>
<dbReference type="EC" id="3.6.5.-" evidence="1"/>
<dbReference type="EMBL" id="CP001048">
    <property type="protein sequence ID" value="ACC87483.1"/>
    <property type="molecule type" value="Genomic_DNA"/>
</dbReference>
<dbReference type="SMR" id="B2K2P2"/>
<dbReference type="KEGG" id="ypb:YPTS_0497"/>
<dbReference type="PATRIC" id="fig|502801.10.peg.4171"/>
<dbReference type="GO" id="GO:0005737">
    <property type="term" value="C:cytoplasm"/>
    <property type="evidence" value="ECO:0007669"/>
    <property type="project" value="UniProtKB-SubCell"/>
</dbReference>
<dbReference type="GO" id="GO:0005525">
    <property type="term" value="F:GTP binding"/>
    <property type="evidence" value="ECO:0007669"/>
    <property type="project" value="UniProtKB-UniRule"/>
</dbReference>
<dbReference type="GO" id="GO:0003924">
    <property type="term" value="F:GTPase activity"/>
    <property type="evidence" value="ECO:0007669"/>
    <property type="project" value="UniProtKB-UniRule"/>
</dbReference>
<dbReference type="GO" id="GO:0000287">
    <property type="term" value="F:magnesium ion binding"/>
    <property type="evidence" value="ECO:0007669"/>
    <property type="project" value="InterPro"/>
</dbReference>
<dbReference type="GO" id="GO:0042254">
    <property type="term" value="P:ribosome biogenesis"/>
    <property type="evidence" value="ECO:0007669"/>
    <property type="project" value="UniProtKB-UniRule"/>
</dbReference>
<dbReference type="CDD" id="cd01898">
    <property type="entry name" value="Obg"/>
    <property type="match status" value="1"/>
</dbReference>
<dbReference type="FunFam" id="2.70.210.12:FF:000001">
    <property type="entry name" value="GTPase Obg"/>
    <property type="match status" value="1"/>
</dbReference>
<dbReference type="FunFam" id="3.40.50.300:FF:000185">
    <property type="entry name" value="GTPase Obg"/>
    <property type="match status" value="1"/>
</dbReference>
<dbReference type="Gene3D" id="2.70.210.12">
    <property type="entry name" value="GTP1/OBG domain"/>
    <property type="match status" value="1"/>
</dbReference>
<dbReference type="Gene3D" id="3.40.50.300">
    <property type="entry name" value="P-loop containing nucleotide triphosphate hydrolases"/>
    <property type="match status" value="1"/>
</dbReference>
<dbReference type="HAMAP" id="MF_01454">
    <property type="entry name" value="GTPase_Obg"/>
    <property type="match status" value="1"/>
</dbReference>
<dbReference type="InterPro" id="IPR031167">
    <property type="entry name" value="G_OBG"/>
</dbReference>
<dbReference type="InterPro" id="IPR006073">
    <property type="entry name" value="GTP-bd"/>
</dbReference>
<dbReference type="InterPro" id="IPR014100">
    <property type="entry name" value="GTP-bd_Obg/CgtA"/>
</dbReference>
<dbReference type="InterPro" id="IPR006074">
    <property type="entry name" value="GTP1-OBG_CS"/>
</dbReference>
<dbReference type="InterPro" id="IPR006169">
    <property type="entry name" value="GTP1_OBG_dom"/>
</dbReference>
<dbReference type="InterPro" id="IPR036726">
    <property type="entry name" value="GTP1_OBG_dom_sf"/>
</dbReference>
<dbReference type="InterPro" id="IPR045086">
    <property type="entry name" value="OBG_GTPase"/>
</dbReference>
<dbReference type="InterPro" id="IPR027417">
    <property type="entry name" value="P-loop_NTPase"/>
</dbReference>
<dbReference type="NCBIfam" id="TIGR02729">
    <property type="entry name" value="Obg_CgtA"/>
    <property type="match status" value="1"/>
</dbReference>
<dbReference type="NCBIfam" id="NF008955">
    <property type="entry name" value="PRK12297.1"/>
    <property type="match status" value="1"/>
</dbReference>
<dbReference type="NCBIfam" id="NF008956">
    <property type="entry name" value="PRK12299.1"/>
    <property type="match status" value="1"/>
</dbReference>
<dbReference type="PANTHER" id="PTHR11702">
    <property type="entry name" value="DEVELOPMENTALLY REGULATED GTP-BINDING PROTEIN-RELATED"/>
    <property type="match status" value="1"/>
</dbReference>
<dbReference type="PANTHER" id="PTHR11702:SF31">
    <property type="entry name" value="MITOCHONDRIAL RIBOSOME-ASSOCIATED GTPASE 2"/>
    <property type="match status" value="1"/>
</dbReference>
<dbReference type="Pfam" id="PF01018">
    <property type="entry name" value="GTP1_OBG"/>
    <property type="match status" value="1"/>
</dbReference>
<dbReference type="Pfam" id="PF01926">
    <property type="entry name" value="MMR_HSR1"/>
    <property type="match status" value="1"/>
</dbReference>
<dbReference type="PIRSF" id="PIRSF002401">
    <property type="entry name" value="GTP_bd_Obg/CgtA"/>
    <property type="match status" value="1"/>
</dbReference>
<dbReference type="PRINTS" id="PR00326">
    <property type="entry name" value="GTP1OBG"/>
</dbReference>
<dbReference type="SUPFAM" id="SSF82051">
    <property type="entry name" value="Obg GTP-binding protein N-terminal domain"/>
    <property type="match status" value="1"/>
</dbReference>
<dbReference type="SUPFAM" id="SSF52540">
    <property type="entry name" value="P-loop containing nucleoside triphosphate hydrolases"/>
    <property type="match status" value="1"/>
</dbReference>
<dbReference type="PROSITE" id="PS51710">
    <property type="entry name" value="G_OBG"/>
    <property type="match status" value="1"/>
</dbReference>
<dbReference type="PROSITE" id="PS00905">
    <property type="entry name" value="GTP1_OBG"/>
    <property type="match status" value="1"/>
</dbReference>
<dbReference type="PROSITE" id="PS51883">
    <property type="entry name" value="OBG"/>
    <property type="match status" value="1"/>
</dbReference>
<keyword id="KW-0963">Cytoplasm</keyword>
<keyword id="KW-0342">GTP-binding</keyword>
<keyword id="KW-0378">Hydrolase</keyword>
<keyword id="KW-0460">Magnesium</keyword>
<keyword id="KW-0479">Metal-binding</keyword>
<keyword id="KW-0547">Nucleotide-binding</keyword>
<reference key="1">
    <citation type="submission" date="2008-04" db="EMBL/GenBank/DDBJ databases">
        <title>Complete sequence of Yersinia pseudotuberculosis PB1/+.</title>
        <authorList>
            <person name="Copeland A."/>
            <person name="Lucas S."/>
            <person name="Lapidus A."/>
            <person name="Glavina del Rio T."/>
            <person name="Dalin E."/>
            <person name="Tice H."/>
            <person name="Bruce D."/>
            <person name="Goodwin L."/>
            <person name="Pitluck S."/>
            <person name="Munk A.C."/>
            <person name="Brettin T."/>
            <person name="Detter J.C."/>
            <person name="Han C."/>
            <person name="Tapia R."/>
            <person name="Schmutz J."/>
            <person name="Larimer F."/>
            <person name="Land M."/>
            <person name="Hauser L."/>
            <person name="Challacombe J.F."/>
            <person name="Green L."/>
            <person name="Lindler L.E."/>
            <person name="Nikolich M.P."/>
            <person name="Richardson P."/>
        </authorList>
    </citation>
    <scope>NUCLEOTIDE SEQUENCE [LARGE SCALE GENOMIC DNA]</scope>
    <source>
        <strain>PB1/+</strain>
    </source>
</reference>
<proteinExistence type="inferred from homology"/>
<name>OBG_YERPB</name>
<protein>
    <recommendedName>
        <fullName evidence="1">GTPase Obg</fullName>
        <ecNumber evidence="1">3.6.5.-</ecNumber>
    </recommendedName>
    <alternativeName>
        <fullName evidence="1">GTP-binding protein Obg</fullName>
    </alternativeName>
</protein>
<evidence type="ECO:0000255" key="1">
    <source>
        <dbReference type="HAMAP-Rule" id="MF_01454"/>
    </source>
</evidence>
<evidence type="ECO:0000255" key="2">
    <source>
        <dbReference type="PROSITE-ProRule" id="PRU01231"/>
    </source>
</evidence>
<evidence type="ECO:0000256" key="3">
    <source>
        <dbReference type="SAM" id="MobiDB-lite"/>
    </source>
</evidence>
<organism>
    <name type="scientific">Yersinia pseudotuberculosis serotype IB (strain PB1/+)</name>
    <dbReference type="NCBI Taxonomy" id="502801"/>
    <lineage>
        <taxon>Bacteria</taxon>
        <taxon>Pseudomonadati</taxon>
        <taxon>Pseudomonadota</taxon>
        <taxon>Gammaproteobacteria</taxon>
        <taxon>Enterobacterales</taxon>
        <taxon>Yersiniaceae</taxon>
        <taxon>Yersinia</taxon>
    </lineage>
</organism>
<accession>B2K2P2</accession>